<keyword id="KW-1185">Reference proteome</keyword>
<keyword id="KW-0687">Ribonucleoprotein</keyword>
<keyword id="KW-0689">Ribosomal protein</keyword>
<keyword id="KW-0694">RNA-binding</keyword>
<keyword id="KW-0699">rRNA-binding</keyword>
<protein>
    <recommendedName>
        <fullName evidence="1">Small ribosomal subunit protein uS17</fullName>
    </recommendedName>
    <alternativeName>
        <fullName evidence="2">30S ribosomal protein S17</fullName>
    </alternativeName>
</protein>
<proteinExistence type="inferred from homology"/>
<gene>
    <name evidence="1" type="primary">rpsQ</name>
    <name evidence="1" type="synonym">rps17</name>
    <name type="ordered locus">gsl3918</name>
</gene>
<dbReference type="EMBL" id="BA000045">
    <property type="protein sequence ID" value="BAC91859.1"/>
    <property type="molecule type" value="Genomic_DNA"/>
</dbReference>
<dbReference type="RefSeq" id="NP_926864.1">
    <property type="nucleotide sequence ID" value="NC_005125.1"/>
</dbReference>
<dbReference type="RefSeq" id="WP_011143906.1">
    <property type="nucleotide sequence ID" value="NC_005125.1"/>
</dbReference>
<dbReference type="SMR" id="Q7NEG1"/>
<dbReference type="FunCoup" id="Q7NEG1">
    <property type="interactions" value="88"/>
</dbReference>
<dbReference type="STRING" id="251221.gene:10761435"/>
<dbReference type="EnsemblBacteria" id="BAC91859">
    <property type="protein sequence ID" value="BAC91859"/>
    <property type="gene ID" value="BAC91859"/>
</dbReference>
<dbReference type="KEGG" id="gvi:gsl3918"/>
<dbReference type="PATRIC" id="fig|251221.4.peg.3951"/>
<dbReference type="eggNOG" id="COG0186">
    <property type="taxonomic scope" value="Bacteria"/>
</dbReference>
<dbReference type="HOGENOM" id="CLU_073626_1_2_3"/>
<dbReference type="InParanoid" id="Q7NEG1"/>
<dbReference type="OrthoDB" id="9811714at2"/>
<dbReference type="PhylomeDB" id="Q7NEG1"/>
<dbReference type="Proteomes" id="UP000000557">
    <property type="component" value="Chromosome"/>
</dbReference>
<dbReference type="GO" id="GO:0022627">
    <property type="term" value="C:cytosolic small ribosomal subunit"/>
    <property type="evidence" value="ECO:0000318"/>
    <property type="project" value="GO_Central"/>
</dbReference>
<dbReference type="GO" id="GO:0019843">
    <property type="term" value="F:rRNA binding"/>
    <property type="evidence" value="ECO:0007669"/>
    <property type="project" value="UniProtKB-UniRule"/>
</dbReference>
<dbReference type="GO" id="GO:0003735">
    <property type="term" value="F:structural constituent of ribosome"/>
    <property type="evidence" value="ECO:0000318"/>
    <property type="project" value="GO_Central"/>
</dbReference>
<dbReference type="GO" id="GO:0006412">
    <property type="term" value="P:translation"/>
    <property type="evidence" value="ECO:0007669"/>
    <property type="project" value="UniProtKB-UniRule"/>
</dbReference>
<dbReference type="CDD" id="cd00364">
    <property type="entry name" value="Ribosomal_uS17"/>
    <property type="match status" value="1"/>
</dbReference>
<dbReference type="FunFam" id="2.40.50.140:FF:000123">
    <property type="entry name" value="30S ribosomal protein S17"/>
    <property type="match status" value="1"/>
</dbReference>
<dbReference type="Gene3D" id="2.40.50.140">
    <property type="entry name" value="Nucleic acid-binding proteins"/>
    <property type="match status" value="1"/>
</dbReference>
<dbReference type="HAMAP" id="MF_01345_B">
    <property type="entry name" value="Ribosomal_uS17_B"/>
    <property type="match status" value="1"/>
</dbReference>
<dbReference type="InterPro" id="IPR012340">
    <property type="entry name" value="NA-bd_OB-fold"/>
</dbReference>
<dbReference type="InterPro" id="IPR000266">
    <property type="entry name" value="Ribosomal_uS17"/>
</dbReference>
<dbReference type="InterPro" id="IPR019984">
    <property type="entry name" value="Ribosomal_uS17_bact/chlr"/>
</dbReference>
<dbReference type="NCBIfam" id="NF004123">
    <property type="entry name" value="PRK05610.1"/>
    <property type="match status" value="1"/>
</dbReference>
<dbReference type="NCBIfam" id="TIGR03635">
    <property type="entry name" value="uS17_bact"/>
    <property type="match status" value="1"/>
</dbReference>
<dbReference type="PANTHER" id="PTHR10744">
    <property type="entry name" value="40S RIBOSOMAL PROTEIN S11 FAMILY MEMBER"/>
    <property type="match status" value="1"/>
</dbReference>
<dbReference type="PANTHER" id="PTHR10744:SF1">
    <property type="entry name" value="SMALL RIBOSOMAL SUBUNIT PROTEIN US17M"/>
    <property type="match status" value="1"/>
</dbReference>
<dbReference type="Pfam" id="PF00366">
    <property type="entry name" value="Ribosomal_S17"/>
    <property type="match status" value="1"/>
</dbReference>
<dbReference type="PRINTS" id="PR00973">
    <property type="entry name" value="RIBOSOMALS17"/>
</dbReference>
<dbReference type="SUPFAM" id="SSF50249">
    <property type="entry name" value="Nucleic acid-binding proteins"/>
    <property type="match status" value="1"/>
</dbReference>
<comment type="function">
    <text evidence="1">One of the primary rRNA binding proteins, it binds specifically to the 5'-end of 16S ribosomal RNA.</text>
</comment>
<comment type="subunit">
    <text evidence="1">Part of the 30S ribosomal subunit.</text>
</comment>
<comment type="similarity">
    <text evidence="1">Belongs to the universal ribosomal protein uS17 family.</text>
</comment>
<accession>Q7NEG1</accession>
<organism>
    <name type="scientific">Gloeobacter violaceus (strain ATCC 29082 / PCC 7421)</name>
    <dbReference type="NCBI Taxonomy" id="251221"/>
    <lineage>
        <taxon>Bacteria</taxon>
        <taxon>Bacillati</taxon>
        <taxon>Cyanobacteriota</taxon>
        <taxon>Cyanophyceae</taxon>
        <taxon>Gloeobacterales</taxon>
        <taxon>Gloeobacteraceae</taxon>
        <taxon>Gloeobacter</taxon>
    </lineage>
</organism>
<sequence>MPRKEKIGLVVSDAMQKTVVVAVENRVPHPKYKKIVVRTRKFKAHDEENRCKVGDRVRILESPPLSKTKRWVVLDILDEARNP</sequence>
<name>RS17_GLOVI</name>
<reference key="1">
    <citation type="journal article" date="2003" name="DNA Res.">
        <title>Complete genome structure of Gloeobacter violaceus PCC 7421, a cyanobacterium that lacks thylakoids.</title>
        <authorList>
            <person name="Nakamura Y."/>
            <person name="Kaneko T."/>
            <person name="Sato S."/>
            <person name="Mimuro M."/>
            <person name="Miyashita H."/>
            <person name="Tsuchiya T."/>
            <person name="Sasamoto S."/>
            <person name="Watanabe A."/>
            <person name="Kawashima K."/>
            <person name="Kishida Y."/>
            <person name="Kiyokawa C."/>
            <person name="Kohara M."/>
            <person name="Matsumoto M."/>
            <person name="Matsuno A."/>
            <person name="Nakazaki N."/>
            <person name="Shimpo S."/>
            <person name="Takeuchi C."/>
            <person name="Yamada M."/>
            <person name="Tabata S."/>
        </authorList>
    </citation>
    <scope>NUCLEOTIDE SEQUENCE [LARGE SCALE GENOMIC DNA]</scope>
    <source>
        <strain>ATCC 29082 / PCC 7421</strain>
    </source>
</reference>
<feature type="chain" id="PRO_0000233483" description="Small ribosomal subunit protein uS17">
    <location>
        <begin position="1"/>
        <end position="83"/>
    </location>
</feature>
<evidence type="ECO:0000255" key="1">
    <source>
        <dbReference type="HAMAP-Rule" id="MF_01345"/>
    </source>
</evidence>
<evidence type="ECO:0000305" key="2"/>